<dbReference type="EC" id="3.5.1.108" evidence="1"/>
<dbReference type="EMBL" id="CP001612">
    <property type="protein sequence ID" value="ACP53262.1"/>
    <property type="molecule type" value="Genomic_DNA"/>
</dbReference>
<dbReference type="RefSeq" id="WP_012719516.1">
    <property type="nucleotide sequence ID" value="NC_012633.1"/>
</dbReference>
<dbReference type="SMR" id="C3PMV2"/>
<dbReference type="KEGG" id="raf:RAF_ORF0316"/>
<dbReference type="HOGENOM" id="CLU_046528_1_1_5"/>
<dbReference type="UniPathway" id="UPA00359">
    <property type="reaction ID" value="UER00478"/>
</dbReference>
<dbReference type="Proteomes" id="UP000002305">
    <property type="component" value="Chromosome"/>
</dbReference>
<dbReference type="GO" id="GO:0016020">
    <property type="term" value="C:membrane"/>
    <property type="evidence" value="ECO:0007669"/>
    <property type="project" value="GOC"/>
</dbReference>
<dbReference type="GO" id="GO:0046872">
    <property type="term" value="F:metal ion binding"/>
    <property type="evidence" value="ECO:0007669"/>
    <property type="project" value="UniProtKB-KW"/>
</dbReference>
<dbReference type="GO" id="GO:0103117">
    <property type="term" value="F:UDP-3-O-acyl-N-acetylglucosamine deacetylase activity"/>
    <property type="evidence" value="ECO:0007669"/>
    <property type="project" value="UniProtKB-UniRule"/>
</dbReference>
<dbReference type="GO" id="GO:0009245">
    <property type="term" value="P:lipid A biosynthetic process"/>
    <property type="evidence" value="ECO:0007669"/>
    <property type="project" value="UniProtKB-UniRule"/>
</dbReference>
<dbReference type="Gene3D" id="3.30.230.20">
    <property type="entry name" value="lpxc deacetylase, domain 1"/>
    <property type="match status" value="1"/>
</dbReference>
<dbReference type="Gene3D" id="3.30.1700.10">
    <property type="entry name" value="lpxc deacetylase, domain 2"/>
    <property type="match status" value="1"/>
</dbReference>
<dbReference type="HAMAP" id="MF_00388">
    <property type="entry name" value="LpxC"/>
    <property type="match status" value="1"/>
</dbReference>
<dbReference type="InterPro" id="IPR020568">
    <property type="entry name" value="Ribosomal_Su5_D2-typ_SF"/>
</dbReference>
<dbReference type="InterPro" id="IPR004463">
    <property type="entry name" value="UDP-acyl_GlcNac_deAcase"/>
</dbReference>
<dbReference type="InterPro" id="IPR011334">
    <property type="entry name" value="UDP-acyl_GlcNac_deAcase_C"/>
</dbReference>
<dbReference type="InterPro" id="IPR015870">
    <property type="entry name" value="UDP-acyl_N-AcGlcN_deAcase_N"/>
</dbReference>
<dbReference type="NCBIfam" id="TIGR00325">
    <property type="entry name" value="lpxC"/>
    <property type="match status" value="1"/>
</dbReference>
<dbReference type="PANTHER" id="PTHR33694">
    <property type="entry name" value="UDP-3-O-ACYL-N-ACETYLGLUCOSAMINE DEACETYLASE 1, MITOCHONDRIAL-RELATED"/>
    <property type="match status" value="1"/>
</dbReference>
<dbReference type="PANTHER" id="PTHR33694:SF1">
    <property type="entry name" value="UDP-3-O-ACYL-N-ACETYLGLUCOSAMINE DEACETYLASE 1, MITOCHONDRIAL-RELATED"/>
    <property type="match status" value="1"/>
</dbReference>
<dbReference type="Pfam" id="PF03331">
    <property type="entry name" value="LpxC"/>
    <property type="match status" value="1"/>
</dbReference>
<dbReference type="SUPFAM" id="SSF54211">
    <property type="entry name" value="Ribosomal protein S5 domain 2-like"/>
    <property type="match status" value="2"/>
</dbReference>
<name>LPXC_RICAE</name>
<feature type="chain" id="PRO_1000205808" description="UDP-3-O-acyl-N-acetylglucosamine deacetylase">
    <location>
        <begin position="1"/>
        <end position="288"/>
    </location>
</feature>
<feature type="active site" description="Proton donor" evidence="1">
    <location>
        <position position="263"/>
    </location>
</feature>
<feature type="binding site" evidence="1">
    <location>
        <position position="79"/>
    </location>
    <ligand>
        <name>Zn(2+)</name>
        <dbReference type="ChEBI" id="CHEBI:29105"/>
    </ligand>
</feature>
<feature type="binding site" evidence="1">
    <location>
        <position position="236"/>
    </location>
    <ligand>
        <name>Zn(2+)</name>
        <dbReference type="ChEBI" id="CHEBI:29105"/>
    </ligand>
</feature>
<feature type="binding site" evidence="1">
    <location>
        <position position="240"/>
    </location>
    <ligand>
        <name>Zn(2+)</name>
        <dbReference type="ChEBI" id="CHEBI:29105"/>
    </ligand>
</feature>
<comment type="function">
    <text evidence="1">Catalyzes the hydrolysis of UDP-3-O-myristoyl-N-acetylglucosamine to form UDP-3-O-myristoylglucosamine and acetate, the committed step in lipid A biosynthesis.</text>
</comment>
<comment type="catalytic activity">
    <reaction evidence="1">
        <text>a UDP-3-O-[(3R)-3-hydroxyacyl]-N-acetyl-alpha-D-glucosamine + H2O = a UDP-3-O-[(3R)-3-hydroxyacyl]-alpha-D-glucosamine + acetate</text>
        <dbReference type="Rhea" id="RHEA:67816"/>
        <dbReference type="ChEBI" id="CHEBI:15377"/>
        <dbReference type="ChEBI" id="CHEBI:30089"/>
        <dbReference type="ChEBI" id="CHEBI:137740"/>
        <dbReference type="ChEBI" id="CHEBI:173225"/>
        <dbReference type="EC" id="3.5.1.108"/>
    </reaction>
</comment>
<comment type="cofactor">
    <cofactor evidence="1">
        <name>Zn(2+)</name>
        <dbReference type="ChEBI" id="CHEBI:29105"/>
    </cofactor>
</comment>
<comment type="pathway">
    <text evidence="1">Glycolipid biosynthesis; lipid IV(A) biosynthesis; lipid IV(A) from (3R)-3-hydroxytetradecanoyl-[acyl-carrier-protein] and UDP-N-acetyl-alpha-D-glucosamine: step 2/6.</text>
</comment>
<comment type="similarity">
    <text evidence="1">Belongs to the LpxC family.</text>
</comment>
<organism>
    <name type="scientific">Rickettsia africae (strain ESF-5)</name>
    <dbReference type="NCBI Taxonomy" id="347255"/>
    <lineage>
        <taxon>Bacteria</taxon>
        <taxon>Pseudomonadati</taxon>
        <taxon>Pseudomonadota</taxon>
        <taxon>Alphaproteobacteria</taxon>
        <taxon>Rickettsiales</taxon>
        <taxon>Rickettsiaceae</taxon>
        <taxon>Rickettsieae</taxon>
        <taxon>Rickettsia</taxon>
        <taxon>spotted fever group</taxon>
    </lineage>
</organism>
<protein>
    <recommendedName>
        <fullName evidence="1">UDP-3-O-acyl-N-acetylglucosamine deacetylase</fullName>
        <shortName evidence="1">UDP-3-O-acyl-GlcNAc deacetylase</shortName>
        <ecNumber evidence="1">3.5.1.108</ecNumber>
    </recommendedName>
    <alternativeName>
        <fullName evidence="1">UDP-3-O-[R-3-hydroxymyristoyl]-N-acetylglucosamine deacetylase</fullName>
    </alternativeName>
</protein>
<proteinExistence type="inferred from homology"/>
<evidence type="ECO:0000255" key="1">
    <source>
        <dbReference type="HAMAP-Rule" id="MF_00388"/>
    </source>
</evidence>
<accession>C3PMV2</accession>
<sequence>MQQSTLLKPVSCYGIGVHSGKRTQLTIEPAKENTGIIFIRTDISSENNYIEASYFNVSDTLLSTTISNDHKVQISTIEHLMAALWGCSIDNAIIKIDGPEVPIMDGSSKPFVFMIECAGKKLQNAPKKYLKILKDIKVVHKDCELYCTPSDHMTVDLTIDFSSKAIGRQNLSFRDQESFTKNIADARTFGFIRDVDYLKSKGLAQGASFENAIGIDEQDKILNPNGLRYEDEFVRHKLLDLFGDLYTNGTSIVSAIKGYKTSHALNNELLHRIFSDTTSYKFVTSSEL</sequence>
<reference key="1">
    <citation type="journal article" date="2009" name="BMC Genomics">
        <title>Analysis of the Rickettsia africae genome reveals that virulence acquisition in Rickettsia species may be explained by genome reduction.</title>
        <authorList>
            <person name="Fournier P.-E."/>
            <person name="El Karkouri K."/>
            <person name="Leroy Q."/>
            <person name="Robert C."/>
            <person name="Giumelli B."/>
            <person name="Renesto P."/>
            <person name="Socolovschi C."/>
            <person name="Parola P."/>
            <person name="Audic S."/>
            <person name="Raoult D."/>
        </authorList>
    </citation>
    <scope>NUCLEOTIDE SEQUENCE [LARGE SCALE GENOMIC DNA]</scope>
    <source>
        <strain>ESF-5</strain>
    </source>
</reference>
<keyword id="KW-0378">Hydrolase</keyword>
<keyword id="KW-0441">Lipid A biosynthesis</keyword>
<keyword id="KW-0444">Lipid biosynthesis</keyword>
<keyword id="KW-0443">Lipid metabolism</keyword>
<keyword id="KW-0479">Metal-binding</keyword>
<keyword id="KW-0862">Zinc</keyword>
<gene>
    <name evidence="1" type="primary">lpxC</name>
    <name type="ordered locus">RAF_ORF0316</name>
</gene>